<evidence type="ECO:0000255" key="1">
    <source>
        <dbReference type="HAMAP-Rule" id="MF_00440"/>
    </source>
</evidence>
<comment type="function">
    <text evidence="1">Negatively regulates transcription of bacterial ribonucleotide reductase nrd genes and operons by binding to NrdR-boxes.</text>
</comment>
<comment type="cofactor">
    <cofactor evidence="1">
        <name>Zn(2+)</name>
        <dbReference type="ChEBI" id="CHEBI:29105"/>
    </cofactor>
    <text evidence="1">Binds 1 zinc ion.</text>
</comment>
<comment type="similarity">
    <text evidence="1">Belongs to the NrdR family.</text>
</comment>
<accession>A1SUU1</accession>
<protein>
    <recommendedName>
        <fullName evidence="1">Transcriptional repressor NrdR</fullName>
    </recommendedName>
</protein>
<dbReference type="EMBL" id="CP000510">
    <property type="protein sequence ID" value="ABM03256.1"/>
    <property type="molecule type" value="Genomic_DNA"/>
</dbReference>
<dbReference type="RefSeq" id="WP_011769816.1">
    <property type="nucleotide sequence ID" value="NC_008709.1"/>
</dbReference>
<dbReference type="SMR" id="A1SUU1"/>
<dbReference type="STRING" id="357804.Ping_1439"/>
<dbReference type="KEGG" id="pin:Ping_1439"/>
<dbReference type="eggNOG" id="COG1327">
    <property type="taxonomic scope" value="Bacteria"/>
</dbReference>
<dbReference type="HOGENOM" id="CLU_108412_0_0_6"/>
<dbReference type="OrthoDB" id="9807461at2"/>
<dbReference type="Proteomes" id="UP000000639">
    <property type="component" value="Chromosome"/>
</dbReference>
<dbReference type="GO" id="GO:0005524">
    <property type="term" value="F:ATP binding"/>
    <property type="evidence" value="ECO:0007669"/>
    <property type="project" value="UniProtKB-KW"/>
</dbReference>
<dbReference type="GO" id="GO:0003677">
    <property type="term" value="F:DNA binding"/>
    <property type="evidence" value="ECO:0007669"/>
    <property type="project" value="UniProtKB-KW"/>
</dbReference>
<dbReference type="GO" id="GO:0008270">
    <property type="term" value="F:zinc ion binding"/>
    <property type="evidence" value="ECO:0007669"/>
    <property type="project" value="UniProtKB-UniRule"/>
</dbReference>
<dbReference type="GO" id="GO:0045892">
    <property type="term" value="P:negative regulation of DNA-templated transcription"/>
    <property type="evidence" value="ECO:0007669"/>
    <property type="project" value="UniProtKB-UniRule"/>
</dbReference>
<dbReference type="HAMAP" id="MF_00440">
    <property type="entry name" value="NrdR"/>
    <property type="match status" value="1"/>
</dbReference>
<dbReference type="InterPro" id="IPR005144">
    <property type="entry name" value="ATP-cone_dom"/>
</dbReference>
<dbReference type="InterPro" id="IPR055173">
    <property type="entry name" value="NrdR-like_N"/>
</dbReference>
<dbReference type="InterPro" id="IPR003796">
    <property type="entry name" value="RNR_NrdR-like"/>
</dbReference>
<dbReference type="NCBIfam" id="TIGR00244">
    <property type="entry name" value="transcriptional regulator NrdR"/>
    <property type="match status" value="1"/>
</dbReference>
<dbReference type="PANTHER" id="PTHR30455">
    <property type="entry name" value="TRANSCRIPTIONAL REPRESSOR NRDR"/>
    <property type="match status" value="1"/>
</dbReference>
<dbReference type="PANTHER" id="PTHR30455:SF2">
    <property type="entry name" value="TRANSCRIPTIONAL REPRESSOR NRDR"/>
    <property type="match status" value="1"/>
</dbReference>
<dbReference type="Pfam" id="PF03477">
    <property type="entry name" value="ATP-cone"/>
    <property type="match status" value="1"/>
</dbReference>
<dbReference type="Pfam" id="PF22811">
    <property type="entry name" value="Zn_ribbon_NrdR"/>
    <property type="match status" value="1"/>
</dbReference>
<dbReference type="PROSITE" id="PS51161">
    <property type="entry name" value="ATP_CONE"/>
    <property type="match status" value="1"/>
</dbReference>
<sequence>MYCPFCNAQDTKVIDSRLVSEGSQVRRRRSCNECNERFTTYEFAELLMPRLIKSDGRREPFNDDKLLVGINRALEKRPVSLEDIDAAVNKLKSTLRATGEREVTSKIVGELVMELLKGLDKIAYIRFASVYRSFKDVKEFGEEIAKLETDF</sequence>
<name>NRDR_PSYIN</name>
<reference key="1">
    <citation type="journal article" date="2008" name="BMC Genomics">
        <title>Genomics of an extreme psychrophile, Psychromonas ingrahamii.</title>
        <authorList>
            <person name="Riley M."/>
            <person name="Staley J.T."/>
            <person name="Danchin A."/>
            <person name="Wang T.Z."/>
            <person name="Brettin T.S."/>
            <person name="Hauser L.J."/>
            <person name="Land M.L."/>
            <person name="Thompson L.S."/>
        </authorList>
    </citation>
    <scope>NUCLEOTIDE SEQUENCE [LARGE SCALE GENOMIC DNA]</scope>
    <source>
        <strain>DSM 17664 / CCUG 51855 / 37</strain>
    </source>
</reference>
<feature type="chain" id="PRO_1000080806" description="Transcriptional repressor NrdR">
    <location>
        <begin position="1"/>
        <end position="151"/>
    </location>
</feature>
<feature type="domain" description="ATP-cone" evidence="1">
    <location>
        <begin position="49"/>
        <end position="139"/>
    </location>
</feature>
<feature type="zinc finger region" evidence="1">
    <location>
        <begin position="3"/>
        <end position="34"/>
    </location>
</feature>
<organism>
    <name type="scientific">Psychromonas ingrahamii (strain DSM 17664 / CCUG 51855 / 37)</name>
    <dbReference type="NCBI Taxonomy" id="357804"/>
    <lineage>
        <taxon>Bacteria</taxon>
        <taxon>Pseudomonadati</taxon>
        <taxon>Pseudomonadota</taxon>
        <taxon>Gammaproteobacteria</taxon>
        <taxon>Alteromonadales</taxon>
        <taxon>Psychromonadaceae</taxon>
        <taxon>Psychromonas</taxon>
    </lineage>
</organism>
<proteinExistence type="inferred from homology"/>
<gene>
    <name evidence="1" type="primary">nrdR</name>
    <name type="ordered locus">Ping_1439</name>
</gene>
<keyword id="KW-0067">ATP-binding</keyword>
<keyword id="KW-0238">DNA-binding</keyword>
<keyword id="KW-0479">Metal-binding</keyword>
<keyword id="KW-0547">Nucleotide-binding</keyword>
<keyword id="KW-1185">Reference proteome</keyword>
<keyword id="KW-0678">Repressor</keyword>
<keyword id="KW-0804">Transcription</keyword>
<keyword id="KW-0805">Transcription regulation</keyword>
<keyword id="KW-0862">Zinc</keyword>
<keyword id="KW-0863">Zinc-finger</keyword>